<protein>
    <recommendedName>
        <fullName evidence="1">UPF0212 protein Mlab_0931</fullName>
    </recommendedName>
</protein>
<feature type="chain" id="PRO_1000066790" description="UPF0212 protein Mlab_0931">
    <location>
        <begin position="1"/>
        <end position="119"/>
    </location>
</feature>
<accession>A2SRZ6</accession>
<sequence length="119" mass="12887">MSDYRVTLEAGWTVKDVESVQDAIGIAVSEAGKRLHPSAKFVDVDVMNMPCPYCGKEINTALVIARTGLVGLLLSMKVFKAENPEHAVHIAKSVIGRALRDVSLSTYSVELIEGDEIAE</sequence>
<name>Y931_METLZ</name>
<proteinExistence type="inferred from homology"/>
<gene>
    <name type="ordered locus">Mlab_0931</name>
</gene>
<evidence type="ECO:0000255" key="1">
    <source>
        <dbReference type="HAMAP-Rule" id="MF_01223"/>
    </source>
</evidence>
<dbReference type="EMBL" id="CP000559">
    <property type="protein sequence ID" value="ABN07102.1"/>
    <property type="molecule type" value="Genomic_DNA"/>
</dbReference>
<dbReference type="RefSeq" id="WP_011833303.1">
    <property type="nucleotide sequence ID" value="NC_008942.1"/>
</dbReference>
<dbReference type="STRING" id="410358.Mlab_0931"/>
<dbReference type="GeneID" id="4795020"/>
<dbReference type="KEGG" id="mla:Mlab_0931"/>
<dbReference type="eggNOG" id="arCOG02119">
    <property type="taxonomic scope" value="Archaea"/>
</dbReference>
<dbReference type="HOGENOM" id="CLU_138334_0_0_2"/>
<dbReference type="OrthoDB" id="63517at2157"/>
<dbReference type="Proteomes" id="UP000000365">
    <property type="component" value="Chromosome"/>
</dbReference>
<dbReference type="HAMAP" id="MF_01223">
    <property type="entry name" value="UPF0212"/>
    <property type="match status" value="1"/>
</dbReference>
<dbReference type="InterPro" id="IPR007564">
    <property type="entry name" value="UPF0212"/>
</dbReference>
<dbReference type="NCBIfam" id="NF003035">
    <property type="entry name" value="PRK03922.1"/>
    <property type="match status" value="1"/>
</dbReference>
<dbReference type="PANTHER" id="PTHR42199">
    <property type="entry name" value="UPF0212 PROTEIN MJ0068"/>
    <property type="match status" value="1"/>
</dbReference>
<dbReference type="PANTHER" id="PTHR42199:SF1">
    <property type="entry name" value="UPF0212 PROTEIN TK1194"/>
    <property type="match status" value="1"/>
</dbReference>
<dbReference type="Pfam" id="PF04475">
    <property type="entry name" value="DUF555"/>
    <property type="match status" value="1"/>
</dbReference>
<comment type="similarity">
    <text evidence="1">Belongs to the UPF0212 family.</text>
</comment>
<organism>
    <name type="scientific">Methanocorpusculum labreanum (strain ATCC 43576 / DSM 4855 / Z)</name>
    <dbReference type="NCBI Taxonomy" id="410358"/>
    <lineage>
        <taxon>Archaea</taxon>
        <taxon>Methanobacteriati</taxon>
        <taxon>Methanobacteriota</taxon>
        <taxon>Stenosarchaea group</taxon>
        <taxon>Methanomicrobia</taxon>
        <taxon>Methanomicrobiales</taxon>
        <taxon>Methanocorpusculaceae</taxon>
        <taxon>Methanocorpusculum</taxon>
    </lineage>
</organism>
<reference key="1">
    <citation type="journal article" date="2009" name="Stand. Genomic Sci.">
        <title>Complete genome sequence of Methanocorpusculum labreanum type strain Z.</title>
        <authorList>
            <person name="Anderson I.J."/>
            <person name="Sieprawska-Lupa M."/>
            <person name="Goltsman E."/>
            <person name="Lapidus A."/>
            <person name="Copeland A."/>
            <person name="Glavina Del Rio T."/>
            <person name="Tice H."/>
            <person name="Dalin E."/>
            <person name="Barry K."/>
            <person name="Pitluck S."/>
            <person name="Hauser L."/>
            <person name="Land M."/>
            <person name="Lucas S."/>
            <person name="Richardson P."/>
            <person name="Whitman W.B."/>
            <person name="Kyrpides N.C."/>
        </authorList>
    </citation>
    <scope>NUCLEOTIDE SEQUENCE [LARGE SCALE GENOMIC DNA]</scope>
    <source>
        <strain>ATCC 43576 / DSM 4855 / Z</strain>
    </source>
</reference>
<keyword id="KW-1185">Reference proteome</keyword>